<accession>C7F8K6</accession>
<feature type="chain" id="PRO_0000445958" description="Probable solute-binding protein AdeT1">
    <location>
        <begin position="1"/>
        <end position="304"/>
    </location>
</feature>
<sequence>MFDPIGKSGDAFALAKDYALEAKNWGADLSLKAYVDERVAAEDLKVGKCDGAIISGLRGRQFNKYTGSLDAVGALTNMKTAINAYKLLSSPMAAKNMVVGPYEIAGLGTIGPAYLFVNDRSINTLAKAAGKKIGVFKYDEAQPKLVQHVGGQAVSVDVTNAGAKFNNHEIDIVPAPIVAFKPFELYKGLGEKGAIVRFPLTQISADFIIRKDQFPAGFGQKSRTWVASQLNRTFGIIAKYESDIPSKYWMDIPKNEQLNYMKMMREARIQLTKAGIYDPKMMNFLKKVRCKENPSNFECALNDE</sequence>
<evidence type="ECO:0000269" key="1">
    <source>
    </source>
</evidence>
<evidence type="ECO:0000303" key="2">
    <source>
    </source>
</evidence>
<evidence type="ECO:0000305" key="3"/>
<evidence type="ECO:0000305" key="4">
    <source>
    </source>
</evidence>
<proteinExistence type="inferred from homology"/>
<reference key="1">
    <citation type="journal article" date="2011" name="J. Antimicrob. Chemother.">
        <title>Molecular cloning and functional characterization of two novel membrane fusion proteins in conferring antimicrobial resistance in Acinetobacter baumannii.</title>
        <authorList>
            <person name="Srinivasan V.B."/>
            <person name="Rajamohan G."/>
            <person name="Pancholi P."/>
            <person name="Marcon M."/>
            <person name="Gebreyes W.A."/>
        </authorList>
    </citation>
    <scope>NUCLEOTIDE SEQUENCE [GENOMIC DNA]</scope>
    <scope>FUNCTION</scope>
    <scope>DISRUPTION PHENOTYPE</scope>
    <source>
        <strain>AC0037</strain>
    </source>
</reference>
<comment type="function">
    <text evidence="1 4">Mediates antimicrobial resistance via active efflux. Contributes to resistance to antibiotics such as chloramphenicol, erythromycin and novobiocin (PubMed:21212056). May be part of a tripartite ATP-independent periplasmic (TRAP) transport system (Probable).</text>
</comment>
<comment type="disruption phenotype">
    <text evidence="1">Deletion of the gene results in increased susceptibility to different antibiotics, dyes, detergents and disinfectants.</text>
</comment>
<comment type="similarity">
    <text evidence="3">Belongs to the bacterial solute-binding protein 7 family.</text>
</comment>
<gene>
    <name evidence="2" type="primary">adeT1</name>
</gene>
<protein>
    <recommendedName>
        <fullName evidence="3">Probable solute-binding protein AdeT1</fullName>
    </recommendedName>
</protein>
<dbReference type="EMBL" id="GQ338837">
    <property type="protein sequence ID" value="ACU27398.1"/>
    <property type="molecule type" value="Genomic_DNA"/>
</dbReference>
<dbReference type="SMR" id="C7F8K6"/>
<dbReference type="STRING" id="400667.A1S_1755"/>
<dbReference type="GO" id="GO:0046677">
    <property type="term" value="P:response to antibiotic"/>
    <property type="evidence" value="ECO:0007669"/>
    <property type="project" value="UniProtKB-KW"/>
</dbReference>
<dbReference type="Gene3D" id="3.40.190.170">
    <property type="entry name" value="Bacterial extracellular solute-binding protein, family 7"/>
    <property type="match status" value="1"/>
</dbReference>
<dbReference type="InterPro" id="IPR045758">
    <property type="entry name" value="AdeT1/2"/>
</dbReference>
<dbReference type="InterPro" id="IPR038404">
    <property type="entry name" value="TRAP_DctP_sf"/>
</dbReference>
<dbReference type="Pfam" id="PF19582">
    <property type="entry name" value="AdeT1_2"/>
    <property type="match status" value="1"/>
</dbReference>
<name>ADET1_ACIBA</name>
<keyword id="KW-0046">Antibiotic resistance</keyword>
<keyword id="KW-0813">Transport</keyword>
<organism>
    <name type="scientific">Acinetobacter baumannii</name>
    <dbReference type="NCBI Taxonomy" id="470"/>
    <lineage>
        <taxon>Bacteria</taxon>
        <taxon>Pseudomonadati</taxon>
        <taxon>Pseudomonadota</taxon>
        <taxon>Gammaproteobacteria</taxon>
        <taxon>Moraxellales</taxon>
        <taxon>Moraxellaceae</taxon>
        <taxon>Acinetobacter</taxon>
        <taxon>Acinetobacter calcoaceticus/baumannii complex</taxon>
    </lineage>
</organism>